<protein>
    <recommendedName>
        <fullName evidence="1">ATP synthase gamma chain</fullName>
    </recommendedName>
    <alternativeName>
        <fullName evidence="1">ATP synthase F1 sector gamma subunit</fullName>
    </alternativeName>
    <alternativeName>
        <fullName evidence="1">F-ATPase gamma subunit</fullName>
    </alternativeName>
</protein>
<dbReference type="EMBL" id="CP000076">
    <property type="protein sequence ID" value="AAY95405.1"/>
    <property type="molecule type" value="Genomic_DNA"/>
</dbReference>
<dbReference type="RefSeq" id="WP_011064382.1">
    <property type="nucleotide sequence ID" value="NC_004129.6"/>
</dbReference>
<dbReference type="SMR" id="Q4K3A8"/>
<dbReference type="STRING" id="220664.PFL_6217"/>
<dbReference type="GeneID" id="57479177"/>
<dbReference type="KEGG" id="pfl:PFL_6217"/>
<dbReference type="PATRIC" id="fig|220664.5.peg.6347"/>
<dbReference type="eggNOG" id="COG0224">
    <property type="taxonomic scope" value="Bacteria"/>
</dbReference>
<dbReference type="HOGENOM" id="CLU_050669_0_1_6"/>
<dbReference type="Proteomes" id="UP000008540">
    <property type="component" value="Chromosome"/>
</dbReference>
<dbReference type="GO" id="GO:0005886">
    <property type="term" value="C:plasma membrane"/>
    <property type="evidence" value="ECO:0007669"/>
    <property type="project" value="UniProtKB-SubCell"/>
</dbReference>
<dbReference type="GO" id="GO:0045259">
    <property type="term" value="C:proton-transporting ATP synthase complex"/>
    <property type="evidence" value="ECO:0007669"/>
    <property type="project" value="UniProtKB-KW"/>
</dbReference>
<dbReference type="GO" id="GO:0005524">
    <property type="term" value="F:ATP binding"/>
    <property type="evidence" value="ECO:0007669"/>
    <property type="project" value="UniProtKB-UniRule"/>
</dbReference>
<dbReference type="GO" id="GO:0046933">
    <property type="term" value="F:proton-transporting ATP synthase activity, rotational mechanism"/>
    <property type="evidence" value="ECO:0007669"/>
    <property type="project" value="UniProtKB-UniRule"/>
</dbReference>
<dbReference type="GO" id="GO:0042777">
    <property type="term" value="P:proton motive force-driven plasma membrane ATP synthesis"/>
    <property type="evidence" value="ECO:0007669"/>
    <property type="project" value="UniProtKB-UniRule"/>
</dbReference>
<dbReference type="CDD" id="cd12151">
    <property type="entry name" value="F1-ATPase_gamma"/>
    <property type="match status" value="1"/>
</dbReference>
<dbReference type="FunFam" id="1.10.287.80:FF:000005">
    <property type="entry name" value="ATP synthase gamma chain"/>
    <property type="match status" value="1"/>
</dbReference>
<dbReference type="FunFam" id="3.40.1380.10:FF:000001">
    <property type="entry name" value="ATP synthase gamma chain"/>
    <property type="match status" value="1"/>
</dbReference>
<dbReference type="Gene3D" id="3.40.1380.10">
    <property type="match status" value="1"/>
</dbReference>
<dbReference type="Gene3D" id="1.10.287.80">
    <property type="entry name" value="ATP synthase, gamma subunit, helix hairpin domain"/>
    <property type="match status" value="1"/>
</dbReference>
<dbReference type="HAMAP" id="MF_00815">
    <property type="entry name" value="ATP_synth_gamma_bact"/>
    <property type="match status" value="1"/>
</dbReference>
<dbReference type="InterPro" id="IPR035968">
    <property type="entry name" value="ATP_synth_F1_ATPase_gsu"/>
</dbReference>
<dbReference type="InterPro" id="IPR000131">
    <property type="entry name" value="ATP_synth_F1_gsu"/>
</dbReference>
<dbReference type="InterPro" id="IPR023632">
    <property type="entry name" value="ATP_synth_F1_gsu_CS"/>
</dbReference>
<dbReference type="NCBIfam" id="TIGR01146">
    <property type="entry name" value="ATPsyn_F1gamma"/>
    <property type="match status" value="1"/>
</dbReference>
<dbReference type="NCBIfam" id="NF004144">
    <property type="entry name" value="PRK05621.1-1"/>
    <property type="match status" value="1"/>
</dbReference>
<dbReference type="PANTHER" id="PTHR11693">
    <property type="entry name" value="ATP SYNTHASE GAMMA CHAIN"/>
    <property type="match status" value="1"/>
</dbReference>
<dbReference type="PANTHER" id="PTHR11693:SF22">
    <property type="entry name" value="ATP SYNTHASE SUBUNIT GAMMA, MITOCHONDRIAL"/>
    <property type="match status" value="1"/>
</dbReference>
<dbReference type="Pfam" id="PF00231">
    <property type="entry name" value="ATP-synt"/>
    <property type="match status" value="1"/>
</dbReference>
<dbReference type="PRINTS" id="PR00126">
    <property type="entry name" value="ATPASEGAMMA"/>
</dbReference>
<dbReference type="SUPFAM" id="SSF52943">
    <property type="entry name" value="ATP synthase (F1-ATPase), gamma subunit"/>
    <property type="match status" value="1"/>
</dbReference>
<dbReference type="PROSITE" id="PS00153">
    <property type="entry name" value="ATPASE_GAMMA"/>
    <property type="match status" value="1"/>
</dbReference>
<evidence type="ECO:0000255" key="1">
    <source>
        <dbReference type="HAMAP-Rule" id="MF_00815"/>
    </source>
</evidence>
<sequence>MAGAKEIRSKIASIKSTQKITSAMEKVAVSKMRKAQMRMAASRPYAERIRQVIGHLANANPEYRHPFMIDRAIKRVGYVVVSSDRGLCGGLNTNLFKALVKDMAVNREQGVEIDLCVVGSKGAAFFRNFGGNVVAAISHLGEEPSINDLIGSVKVMLDAYLEGRIDRLSVVSNKFINTMTQQPTVEQLIPLEATPDQELKHHWDYLYEPDAKELLDGLMVRYVESQVYQAVVENNAAEQAARMIAMKNATDNAGDLISDLQLIYNKARQAAITQEISEIVGGAAAV</sequence>
<reference key="1">
    <citation type="journal article" date="2005" name="Nat. Biotechnol.">
        <title>Complete genome sequence of the plant commensal Pseudomonas fluorescens Pf-5.</title>
        <authorList>
            <person name="Paulsen I.T."/>
            <person name="Press C.M."/>
            <person name="Ravel J."/>
            <person name="Kobayashi D.Y."/>
            <person name="Myers G.S.A."/>
            <person name="Mavrodi D.V."/>
            <person name="DeBoy R.T."/>
            <person name="Seshadri R."/>
            <person name="Ren Q."/>
            <person name="Madupu R."/>
            <person name="Dodson R.J."/>
            <person name="Durkin A.S."/>
            <person name="Brinkac L.M."/>
            <person name="Daugherty S.C."/>
            <person name="Sullivan S.A."/>
            <person name="Rosovitz M.J."/>
            <person name="Gwinn M.L."/>
            <person name="Zhou L."/>
            <person name="Schneider D.J."/>
            <person name="Cartinhour S.W."/>
            <person name="Nelson W.C."/>
            <person name="Weidman J."/>
            <person name="Watkins K."/>
            <person name="Tran K."/>
            <person name="Khouri H."/>
            <person name="Pierson E.A."/>
            <person name="Pierson L.S. III"/>
            <person name="Thomashow L.S."/>
            <person name="Loper J.E."/>
        </authorList>
    </citation>
    <scope>NUCLEOTIDE SEQUENCE [LARGE SCALE GENOMIC DNA]</scope>
    <source>
        <strain>ATCC BAA-477 / NRRL B-23932 / Pf-5</strain>
    </source>
</reference>
<proteinExistence type="inferred from homology"/>
<name>ATPG_PSEF5</name>
<keyword id="KW-0066">ATP synthesis</keyword>
<keyword id="KW-0997">Cell inner membrane</keyword>
<keyword id="KW-1003">Cell membrane</keyword>
<keyword id="KW-0139">CF(1)</keyword>
<keyword id="KW-0375">Hydrogen ion transport</keyword>
<keyword id="KW-0406">Ion transport</keyword>
<keyword id="KW-0472">Membrane</keyword>
<keyword id="KW-0813">Transport</keyword>
<comment type="function">
    <text evidence="1">Produces ATP from ADP in the presence of a proton gradient across the membrane. The gamma chain is believed to be important in regulating ATPase activity and the flow of protons through the CF(0) complex.</text>
</comment>
<comment type="subunit">
    <text evidence="1">F-type ATPases have 2 components, CF(1) - the catalytic core - and CF(0) - the membrane proton channel. CF(1) has five subunits: alpha(3), beta(3), gamma(1), delta(1), epsilon(1). CF(0) has three main subunits: a, b and c.</text>
</comment>
<comment type="subcellular location">
    <subcellularLocation>
        <location evidence="1">Cell inner membrane</location>
        <topology evidence="1">Peripheral membrane protein</topology>
    </subcellularLocation>
</comment>
<comment type="similarity">
    <text evidence="1">Belongs to the ATPase gamma chain family.</text>
</comment>
<gene>
    <name evidence="1" type="primary">atpG</name>
    <name type="ordered locus">PFL_6217</name>
</gene>
<feature type="chain" id="PRO_0000073346" description="ATP synthase gamma chain">
    <location>
        <begin position="1"/>
        <end position="286"/>
    </location>
</feature>
<organism>
    <name type="scientific">Pseudomonas fluorescens (strain ATCC BAA-477 / NRRL B-23932 / Pf-5)</name>
    <dbReference type="NCBI Taxonomy" id="220664"/>
    <lineage>
        <taxon>Bacteria</taxon>
        <taxon>Pseudomonadati</taxon>
        <taxon>Pseudomonadota</taxon>
        <taxon>Gammaproteobacteria</taxon>
        <taxon>Pseudomonadales</taxon>
        <taxon>Pseudomonadaceae</taxon>
        <taxon>Pseudomonas</taxon>
    </lineage>
</organism>
<accession>Q4K3A8</accession>